<reference key="1">
    <citation type="journal article" date="2015" name="Genome Announc.">
        <title>Genome sequence of Aspergillus flavus NRRL 3357, a strain that causes aflatoxin contamination of food and feed.</title>
        <authorList>
            <person name="Nierman W.C."/>
            <person name="Yu J."/>
            <person name="Fedorova-Abrams N.D."/>
            <person name="Losada L."/>
            <person name="Cleveland T.E."/>
            <person name="Bhatnagar D."/>
            <person name="Bennett J.W."/>
            <person name="Dean R."/>
            <person name="Payne G.A."/>
        </authorList>
    </citation>
    <scope>NUCLEOTIDE SEQUENCE [LARGE SCALE GENOMIC DNA]</scope>
    <source>
        <strain>ATCC 200026 / FGSC A1120 / IAM 13836 / NRRL 3357 / JCM 12722 / SRRC 167</strain>
    </source>
</reference>
<reference key="2">
    <citation type="journal article" date="2021" name="G3 (Bethesda)">
        <title>Chromosome assembled and annotated genome sequence of Aspergillus flavus NRRL 3357.</title>
        <authorList>
            <person name="Skerker J.M."/>
            <person name="Pianalto K.M."/>
            <person name="Mondo S.J."/>
            <person name="Yang K."/>
            <person name="Arkin A.P."/>
            <person name="Keller N.P."/>
            <person name="Grigoriev I.V."/>
            <person name="Glass N.L."/>
        </authorList>
    </citation>
    <scope>NUCLEOTIDE SEQUENCE [LARGE SCALE GENOMIC DNA]</scope>
    <source>
        <strain>ATCC 200026 / FGSC A1120 / IAM 13836 / NRRL 3357 / JCM 12722 / SRRC 167</strain>
    </source>
</reference>
<reference key="3">
    <citation type="journal article" date="2014" name="Fungal Genet. Biol.">
        <title>Characterization of the biosynthetic gene cluster for the ribosomally synthesized cyclic peptide ustiloxin B in Aspergillus flavus.</title>
        <authorList>
            <person name="Umemura M."/>
            <person name="Nagano N."/>
            <person name="Koike H."/>
            <person name="Kawano J."/>
            <person name="Ishii T."/>
            <person name="Miyamura Y."/>
            <person name="Kikuchi M."/>
            <person name="Tamano K."/>
            <person name="Yu J."/>
            <person name="Shin-ya K."/>
            <person name="Machida M."/>
        </authorList>
    </citation>
    <scope>FUNCTION</scope>
    <scope>DISRUPTION PHENOTYPE</scope>
</reference>
<reference key="4">
    <citation type="journal article" date="2016" name="Angew. Chem. Int. Ed.">
        <title>Unveiling the biosynthetic pathway of the ribosomally synthesized and post-translationally modified peptide ustiloxin B in filamentous fungi.</title>
        <authorList>
            <person name="Ye Y."/>
            <person name="Minami A."/>
            <person name="Igarashi Y."/>
            <person name="Izumikawa M."/>
            <person name="Umemura M."/>
            <person name="Nagano N."/>
            <person name="Machida M."/>
            <person name="Kawahara T."/>
            <person name="Shin-Ya K."/>
            <person name="Gomi K."/>
            <person name="Oikawa H."/>
        </authorList>
    </citation>
    <scope>FUNCTION</scope>
</reference>
<reference key="5">
    <citation type="journal article" date="2016" name="Fungal Genet. Biol.">
        <title>Class of cyclic ribosomal peptide synthetic genes in filamentous fungi.</title>
        <authorList>
            <person name="Nagano N."/>
            <person name="Umemura M."/>
            <person name="Izumikawa M."/>
            <person name="Kawano J."/>
            <person name="Ishii T."/>
            <person name="Kikuchi M."/>
            <person name="Tomii K."/>
            <person name="Kumagai T."/>
            <person name="Yoshimi A."/>
            <person name="Machida M."/>
            <person name="Abe K."/>
            <person name="Shin-ya K."/>
            <person name="Asai K."/>
        </authorList>
    </citation>
    <scope>FUNCTION</scope>
    <scope>DISRUPTION PHENOTYPE</scope>
    <scope>CATALYTIC ACTIVITY</scope>
    <scope>PATHWAY</scope>
</reference>
<dbReference type="EC" id="1.-.-.-" evidence="9"/>
<dbReference type="EMBL" id="EQ963480">
    <property type="protein sequence ID" value="EED49421.1"/>
    <property type="status" value="ALT_SEQ"/>
    <property type="molecule type" value="Genomic_DNA"/>
</dbReference>
<dbReference type="EMBL" id="CP044621">
    <property type="protein sequence ID" value="QRD84930.1"/>
    <property type="molecule type" value="Genomic_DNA"/>
</dbReference>
<dbReference type="RefSeq" id="XP_002381322.1">
    <property type="nucleotide sequence ID" value="XM_002381281.1"/>
</dbReference>
<dbReference type="STRING" id="332952.B8NM70"/>
<dbReference type="EnsemblFungi" id="EED49421">
    <property type="protein sequence ID" value="EED49421"/>
    <property type="gene ID" value="AFLA_095020"/>
</dbReference>
<dbReference type="VEuPathDB" id="FungiDB:AFLA_009738"/>
<dbReference type="VEuPathDB" id="FungiDB:F9C07_2234865"/>
<dbReference type="HOGENOM" id="CLU_2605602_0_0_1"/>
<dbReference type="Proteomes" id="UP000596276">
    <property type="component" value="Chromosome 5"/>
</dbReference>
<dbReference type="GO" id="GO:0016020">
    <property type="term" value="C:membrane"/>
    <property type="evidence" value="ECO:0007669"/>
    <property type="project" value="UniProtKB-SubCell"/>
</dbReference>
<dbReference type="GO" id="GO:0016491">
    <property type="term" value="F:oxidoreductase activity"/>
    <property type="evidence" value="ECO:0007669"/>
    <property type="project" value="UniProtKB-KW"/>
</dbReference>
<dbReference type="GO" id="GO:0043386">
    <property type="term" value="P:mycotoxin biosynthetic process"/>
    <property type="evidence" value="ECO:0007669"/>
    <property type="project" value="InterPro"/>
</dbReference>
<dbReference type="InterPro" id="IPR021765">
    <property type="entry name" value="UstYa-like"/>
</dbReference>
<dbReference type="PANTHER" id="PTHR33365:SF11">
    <property type="entry name" value="TAT PATHWAY SIGNAL SEQUENCE"/>
    <property type="match status" value="1"/>
</dbReference>
<dbReference type="PANTHER" id="PTHR33365">
    <property type="entry name" value="YALI0B05434P"/>
    <property type="match status" value="1"/>
</dbReference>
<dbReference type="Pfam" id="PF11807">
    <property type="entry name" value="UstYa"/>
    <property type="match status" value="1"/>
</dbReference>
<protein>
    <recommendedName>
        <fullName evidence="7">Oxidase ustYb</fullName>
        <ecNumber evidence="9">1.-.-.-</ecNumber>
    </recommendedName>
    <alternativeName>
        <fullName evidence="7">Ustiloxin B biosynthesis protein Yb</fullName>
    </alternativeName>
</protein>
<name>USTYB_ASPFN</name>
<comment type="function">
    <text evidence="4 5 6">Oxidase; part of the gene cluster that mediates the biosynthesis of the secondary metabolite ustiloxin B, an antimitotic tetrapeptide (PubMed:24841822, PubMed:26703898, PubMed:27166860). First, ustA is processed by the subtilisin-like endoprotease Kex2 that is outside the ustiloxin B gene cluster, at the C-terminal side of Arg-Lys, after transfer to Golgi apparatus through the endoplasmic reticulum (ER) (PubMed:24841822). Cleavage by KEX2 generates 16 peptides YAIG-I to YAIG-XVI (PubMed:24841822). To process the precursor peptide further, at least two peptidases are necessary to cleave the N-terminal and C-terminal sides of the Tyr-Ala-Ile-Gly core peptide which serves as backbone for the synthesis of ustiloxin B, through cyclization and modification of the tyrosine with a non-protein coding amino acid, norvaline (PubMed:24841822). One of the two peptidases must be the serine peptidase ustP; and the other pepdidase is probably ustH (PubMed:24841822). Macrocyclization of the core peptide derived from ustA requires the tyrosinase ustQ, as well as the homologous oxidases ustYa and ustYb, and leads to the production of the first cyclization product N-desmethylustiloxin F (PubMed:26703898, PubMed:27166860). For the formation of N-desmethylustiloxin F, three oxidation steps are required, hydroxylation at the benzylic position, hydroxylation at either the aromatic ring of Tyr or beta-position of Ile, and oxidative cyclization (PubMed:27166860). UstQ may catalyze the oxidation of a phenol moiety, whereas the ustYa and ustYb are most likely responsible for the remaining two-step oxidations (PubMed:27166860). N-desmethylustiloxin F is then methylated by ustM to yield ustiloxin F which in turn substrate of the cytochrome P450 monooxygenase ustC which catalyzes the formation of S-deoxyustiloxin H (PubMed:27166860). The flavoprotein monooxygenases ustF1 and ustF2 then participate in the modification of the side chain of S-deoxyustiloxin H, leading to the synthesis of an oxime intermediate, via ustiloxin H (PubMed:27166860). Finally, carboxylative dehydration performed by the cysteine desulfurase-like protein ustD yields ustiloxin B (PubMed:27166860).</text>
</comment>
<comment type="pathway">
    <text evidence="5">Mycotoxin biosynthesis.</text>
</comment>
<comment type="subcellular location">
    <subcellularLocation>
        <location evidence="2">Membrane</location>
        <topology evidence="2">Single-pass membrane protein</topology>
    </subcellularLocation>
</comment>
<comment type="domain">
    <text evidence="5">The 2 HXXHC motifs are conserved in ustYa family proteins and might form active sites.</text>
</comment>
<comment type="disruption phenotype">
    <text evidence="4 5">Decreases the production of ustiloxin B (PubMed:24841822, PubMed:26703898).</text>
</comment>
<comment type="similarity">
    <text evidence="8">Belongs to the ustYa family.</text>
</comment>
<comment type="sequence caution" evidence="8">
    <conflict type="erroneous gene model prediction">
        <sequence resource="EMBL-CDS" id="EED49421"/>
    </conflict>
</comment>
<feature type="chain" id="PRO_0000437294" description="Oxidase ustYb">
    <location>
        <begin position="1"/>
        <end position="259"/>
    </location>
</feature>
<feature type="transmembrane region" description="Helical" evidence="2">
    <location>
        <begin position="36"/>
        <end position="56"/>
    </location>
</feature>
<feature type="short sequence motif" description="HXXHC 1" evidence="1">
    <location>
        <begin position="147"/>
        <end position="151"/>
    </location>
</feature>
<feature type="short sequence motif" description="HXXHC 2" evidence="1">
    <location>
        <begin position="197"/>
        <end position="201"/>
    </location>
</feature>
<feature type="glycosylation site" description="N-linked (GlcNAc...) asparagine" evidence="3">
    <location>
        <position position="102"/>
    </location>
</feature>
<feature type="glycosylation site" description="N-linked (GlcNAc...) asparagine" evidence="3">
    <location>
        <position position="122"/>
    </location>
</feature>
<proteinExistence type="evidence at protein level"/>
<gene>
    <name evidence="7" type="primary">ustYb</name>
    <name type="ORF">AFLA_095020</name>
    <name type="ORF">F9C07_2234865</name>
</gene>
<evidence type="ECO:0000250" key="1">
    <source>
        <dbReference type="UniProtKB" id="B8NM67"/>
    </source>
</evidence>
<evidence type="ECO:0000255" key="2"/>
<evidence type="ECO:0000255" key="3">
    <source>
        <dbReference type="PROSITE-ProRule" id="PRU00498"/>
    </source>
</evidence>
<evidence type="ECO:0000269" key="4">
    <source>
    </source>
</evidence>
<evidence type="ECO:0000269" key="5">
    <source>
    </source>
</evidence>
<evidence type="ECO:0000269" key="6">
    <source>
    </source>
</evidence>
<evidence type="ECO:0000303" key="7">
    <source>
    </source>
</evidence>
<evidence type="ECO:0000305" key="8"/>
<evidence type="ECO:0000305" key="9">
    <source>
    </source>
</evidence>
<organism>
    <name type="scientific">Aspergillus flavus (strain ATCC 200026 / FGSC A1120 / IAM 13836 / NRRL 3357 / JCM 12722 / SRRC 167)</name>
    <dbReference type="NCBI Taxonomy" id="332952"/>
    <lineage>
        <taxon>Eukaryota</taxon>
        <taxon>Fungi</taxon>
        <taxon>Dikarya</taxon>
        <taxon>Ascomycota</taxon>
        <taxon>Pezizomycotina</taxon>
        <taxon>Eurotiomycetes</taxon>
        <taxon>Eurotiomycetidae</taxon>
        <taxon>Eurotiales</taxon>
        <taxon>Aspergillaceae</taxon>
        <taxon>Aspergillus</taxon>
        <taxon>Aspergillus subgen. Circumdati</taxon>
    </lineage>
</organism>
<accession>B8NM70</accession>
<accession>A0A7G5KBY2</accession>
<sequence length="259" mass="29469">MSDLYAHRESDEYLLKPEHFAEKKNRPKRWDCLRPIIYTSLAFVGFIEILFFGIFFAQATRKTPERLLGELNGLVGNFPARRVIFRSDPLAASDHKTEESRNATMNNWLSYMPRGNGFIAVNQTERYTLPPPIKQLGQDTYSIAVFHQLHCLYAIMSVYDDLAAAKSAADLNAHHSRDDTHSNEHPHEQVHVHSHDHVDHCFQYLRQSLLCCGDTALEGQDPRTDNPGTDGTGAVHICKDFDGILAWADSRRLVDAKHN</sequence>
<keyword id="KW-0325">Glycoprotein</keyword>
<keyword id="KW-0472">Membrane</keyword>
<keyword id="KW-0560">Oxidoreductase</keyword>
<keyword id="KW-1185">Reference proteome</keyword>
<keyword id="KW-0812">Transmembrane</keyword>
<keyword id="KW-1133">Transmembrane helix</keyword>